<proteinExistence type="evidence at protein level"/>
<evidence type="ECO:0000250" key="1">
    <source>
        <dbReference type="UniProtKB" id="O18840"/>
    </source>
</evidence>
<evidence type="ECO:0000250" key="2">
    <source>
        <dbReference type="UniProtKB" id="P60709"/>
    </source>
</evidence>
<evidence type="ECO:0000250" key="3">
    <source>
        <dbReference type="UniProtKB" id="P60710"/>
    </source>
</evidence>
<evidence type="ECO:0000250" key="4">
    <source>
        <dbReference type="UniProtKB" id="P68137"/>
    </source>
</evidence>
<evidence type="ECO:0000250" key="5">
    <source>
        <dbReference type="UniProtKB" id="Q6QAQ1"/>
    </source>
</evidence>
<evidence type="ECO:0000269" key="6">
    <source>
    </source>
</evidence>
<evidence type="ECO:0000269" key="7">
    <source>
    </source>
</evidence>
<evidence type="ECO:0000305" key="8"/>
<organism>
    <name type="scientific">Rattus norvegicus</name>
    <name type="common">Rat</name>
    <dbReference type="NCBI Taxonomy" id="10116"/>
    <lineage>
        <taxon>Eukaryota</taxon>
        <taxon>Metazoa</taxon>
        <taxon>Chordata</taxon>
        <taxon>Craniata</taxon>
        <taxon>Vertebrata</taxon>
        <taxon>Euteleostomi</taxon>
        <taxon>Mammalia</taxon>
        <taxon>Eutheria</taxon>
        <taxon>Euarchontoglires</taxon>
        <taxon>Glires</taxon>
        <taxon>Rodentia</taxon>
        <taxon>Myomorpha</taxon>
        <taxon>Muroidea</taxon>
        <taxon>Muridae</taxon>
        <taxon>Murinae</taxon>
        <taxon>Rattus</taxon>
    </lineage>
</organism>
<name>ACTB_RAT</name>
<feature type="chain" id="PRO_0000000781" description="Actin, cytoplasmic 1">
    <location>
        <begin position="1"/>
        <end position="375"/>
    </location>
</feature>
<feature type="initiator methionine" description="Removed; alternate" evidence="2">
    <location>
        <position position="1"/>
    </location>
</feature>
<feature type="chain" id="PRO_0000367081" description="Actin, cytoplasmic 1, N-terminally processed">
    <location>
        <begin position="2"/>
        <end position="375"/>
    </location>
</feature>
<feature type="modified residue" description="N-acetylmethionine" evidence="2">
    <location>
        <position position="1"/>
    </location>
</feature>
<feature type="modified residue" description="N-acetylaspartate; in Actin, cytoplasmic 1, N-terminally processed" evidence="2">
    <location>
        <position position="2"/>
    </location>
</feature>
<feature type="modified residue" description="Methionine (R)-sulfoxide" evidence="3">
    <location>
        <position position="44"/>
    </location>
</feature>
<feature type="modified residue" description="Methionine (R)-sulfoxide" evidence="3">
    <location>
        <position position="47"/>
    </location>
</feature>
<feature type="modified residue" description="Tele-methylhistidine" evidence="6">
    <location>
        <position position="73"/>
    </location>
</feature>
<feature type="modified residue" description="N6-methyllysine" evidence="2">
    <location>
        <position position="84"/>
    </location>
</feature>
<gene>
    <name type="primary">Actb</name>
</gene>
<dbReference type="EC" id="3.6.4.-" evidence="4"/>
<dbReference type="EMBL" id="V01217">
    <property type="protein sequence ID" value="CAA24528.1"/>
    <property type="molecule type" value="Genomic_DNA"/>
</dbReference>
<dbReference type="EMBL" id="BC063166">
    <property type="protein sequence ID" value="AAH63166.1"/>
    <property type="molecule type" value="mRNA"/>
</dbReference>
<dbReference type="RefSeq" id="NP_112406.1">
    <property type="nucleotide sequence ID" value="NM_031144.3"/>
</dbReference>
<dbReference type="PDB" id="9C21">
    <property type="method" value="EM"/>
    <property type="resolution" value="3.40 A"/>
    <property type="chains" value="A/B/C/D/E/F=1-375"/>
</dbReference>
<dbReference type="PDBsum" id="9C21"/>
<dbReference type="EMDB" id="EMD-45135"/>
<dbReference type="SMR" id="P60711"/>
<dbReference type="BioGRID" id="249680">
    <property type="interactions" value="24"/>
</dbReference>
<dbReference type="CORUM" id="P60711"/>
<dbReference type="FunCoup" id="P60711">
    <property type="interactions" value="3268"/>
</dbReference>
<dbReference type="IntAct" id="P60711">
    <property type="interactions" value="22"/>
</dbReference>
<dbReference type="MINT" id="P60711"/>
<dbReference type="STRING" id="10116.ENSRNOP00000072672"/>
<dbReference type="CarbonylDB" id="P60711"/>
<dbReference type="GlyGen" id="P60711">
    <property type="glycosylation" value="2 sites, 1 O-linked glycan (2 sites)"/>
</dbReference>
<dbReference type="iPTMnet" id="P60711"/>
<dbReference type="PhosphoSitePlus" id="P60711"/>
<dbReference type="jPOST" id="P60711"/>
<dbReference type="PaxDb" id="10116-ENSRNOP00000044296"/>
<dbReference type="Ensembl" id="ENSRNOT00000105242.1">
    <property type="protein sequence ID" value="ENSRNOP00000088195.1"/>
    <property type="gene ID" value="ENSRNOG00000034254.5"/>
</dbReference>
<dbReference type="GeneID" id="81822"/>
<dbReference type="KEGG" id="rno:81822"/>
<dbReference type="UCSC" id="RGD:628837">
    <property type="organism name" value="rat"/>
</dbReference>
<dbReference type="AGR" id="RGD:628837"/>
<dbReference type="CTD" id="60"/>
<dbReference type="RGD" id="628837">
    <property type="gene designation" value="Actb"/>
</dbReference>
<dbReference type="eggNOG" id="KOG0676">
    <property type="taxonomic scope" value="Eukaryota"/>
</dbReference>
<dbReference type="GeneTree" id="ENSGT00950000182960"/>
<dbReference type="HOGENOM" id="CLU_027965_0_2_1"/>
<dbReference type="InParanoid" id="P60711"/>
<dbReference type="OrthoDB" id="4012at9989"/>
<dbReference type="PhylomeDB" id="P60711"/>
<dbReference type="TreeFam" id="TF354237"/>
<dbReference type="Reactome" id="R-RNO-190873">
    <property type="pathway name" value="Gap junction degradation"/>
</dbReference>
<dbReference type="Reactome" id="R-RNO-196025">
    <property type="pathway name" value="Formation of annular gap junctions"/>
</dbReference>
<dbReference type="Reactome" id="R-RNO-2029482">
    <property type="pathway name" value="Regulation of actin dynamics for phagocytic cup formation"/>
</dbReference>
<dbReference type="Reactome" id="R-RNO-3928662">
    <property type="pathway name" value="EPHB-mediated forward signaling"/>
</dbReference>
<dbReference type="Reactome" id="R-RNO-418990">
    <property type="pathway name" value="Adherens junctions interactions"/>
</dbReference>
<dbReference type="Reactome" id="R-RNO-437239">
    <property type="pathway name" value="Recycling pathway of L1"/>
</dbReference>
<dbReference type="Reactome" id="R-RNO-4420097">
    <property type="pathway name" value="VEGFA-VEGFR2 Pathway"/>
</dbReference>
<dbReference type="Reactome" id="R-RNO-445095">
    <property type="pathway name" value="Interaction between L1 and Ankyrins"/>
</dbReference>
<dbReference type="Reactome" id="R-RNO-446353">
    <property type="pathway name" value="Cell-extracellular matrix interactions"/>
</dbReference>
<dbReference type="Reactome" id="R-RNO-5250924">
    <property type="pathway name" value="B-WICH complex positively regulates rRNA expression"/>
</dbReference>
<dbReference type="Reactome" id="R-RNO-5626467">
    <property type="pathway name" value="RHO GTPases activate IQGAPs"/>
</dbReference>
<dbReference type="Reactome" id="R-RNO-5663213">
    <property type="pathway name" value="RHO GTPases Activate WASPs and WAVEs"/>
</dbReference>
<dbReference type="Reactome" id="R-RNO-5663220">
    <property type="pathway name" value="RHO GTPases Activate Formins"/>
</dbReference>
<dbReference type="Reactome" id="R-RNO-5674135">
    <property type="pathway name" value="MAP2K and MAPK activation"/>
</dbReference>
<dbReference type="Reactome" id="R-RNO-5689603">
    <property type="pathway name" value="UCH proteinases"/>
</dbReference>
<dbReference type="Reactome" id="R-RNO-5696394">
    <property type="pathway name" value="DNA Damage Recognition in GG-NER"/>
</dbReference>
<dbReference type="Reactome" id="R-RNO-8856828">
    <property type="pathway name" value="Clathrin-mediated endocytosis"/>
</dbReference>
<dbReference type="Reactome" id="R-RNO-9035034">
    <property type="pathway name" value="RHOF GTPase cycle"/>
</dbReference>
<dbReference type="Reactome" id="R-RNO-9913351">
    <property type="pathway name" value="Formation of the dystrophin-glycoprotein complex (DGC)"/>
</dbReference>
<dbReference type="PRO" id="PR:P60711"/>
<dbReference type="Proteomes" id="UP000002494">
    <property type="component" value="Chromosome 12"/>
</dbReference>
<dbReference type="Bgee" id="ENSRNOG00000034254">
    <property type="expression patterns" value="Expressed in lung and 19 other cell types or tissues"/>
</dbReference>
<dbReference type="ExpressionAtlas" id="P60711">
    <property type="expression patterns" value="baseline and differential"/>
</dbReference>
<dbReference type="GO" id="GO:0015629">
    <property type="term" value="C:actin cytoskeleton"/>
    <property type="evidence" value="ECO:0000266"/>
    <property type="project" value="RGD"/>
</dbReference>
<dbReference type="GO" id="GO:0005884">
    <property type="term" value="C:actin filament"/>
    <property type="evidence" value="ECO:0000318"/>
    <property type="project" value="GO_Central"/>
</dbReference>
<dbReference type="GO" id="GO:0005912">
    <property type="term" value="C:adherens junction"/>
    <property type="evidence" value="ECO:0000266"/>
    <property type="project" value="RGD"/>
</dbReference>
<dbReference type="GO" id="GO:0043296">
    <property type="term" value="C:apical junction complex"/>
    <property type="evidence" value="ECO:0000266"/>
    <property type="project" value="RGD"/>
</dbReference>
<dbReference type="GO" id="GO:0030424">
    <property type="term" value="C:axon"/>
    <property type="evidence" value="ECO:0000314"/>
    <property type="project" value="RGD"/>
</dbReference>
<dbReference type="GO" id="GO:0005903">
    <property type="term" value="C:brush border"/>
    <property type="evidence" value="ECO:0000266"/>
    <property type="project" value="RGD"/>
</dbReference>
<dbReference type="GO" id="GO:0044305">
    <property type="term" value="C:calyx of Held"/>
    <property type="evidence" value="ECO:0000266"/>
    <property type="project" value="RGD"/>
</dbReference>
<dbReference type="GO" id="GO:0005911">
    <property type="term" value="C:cell-cell junction"/>
    <property type="evidence" value="ECO:0000266"/>
    <property type="project" value="RGD"/>
</dbReference>
<dbReference type="GO" id="GO:0030863">
    <property type="term" value="C:cortical cytoskeleton"/>
    <property type="evidence" value="ECO:0000266"/>
    <property type="project" value="RGD"/>
</dbReference>
<dbReference type="GO" id="GO:0005737">
    <property type="term" value="C:cytoplasm"/>
    <property type="evidence" value="ECO:0000266"/>
    <property type="project" value="RGD"/>
</dbReference>
<dbReference type="GO" id="GO:0036464">
    <property type="term" value="C:cytoplasmic ribonucleoprotein granule"/>
    <property type="evidence" value="ECO:0000266"/>
    <property type="project" value="RGD"/>
</dbReference>
<dbReference type="GO" id="GO:0005856">
    <property type="term" value="C:cytoskeleton"/>
    <property type="evidence" value="ECO:0000314"/>
    <property type="project" value="ARUK-UCL"/>
</dbReference>
<dbReference type="GO" id="GO:0005829">
    <property type="term" value="C:cytosol"/>
    <property type="evidence" value="ECO:0000266"/>
    <property type="project" value="RGD"/>
</dbReference>
<dbReference type="GO" id="GO:0097433">
    <property type="term" value="C:dense body"/>
    <property type="evidence" value="ECO:0000250"/>
    <property type="project" value="AgBase"/>
</dbReference>
<dbReference type="GO" id="GO:0005925">
    <property type="term" value="C:focal adhesion"/>
    <property type="evidence" value="ECO:0000250"/>
    <property type="project" value="AgBase"/>
</dbReference>
<dbReference type="GO" id="GO:0098978">
    <property type="term" value="C:glutamatergic synapse"/>
    <property type="evidence" value="ECO:0000266"/>
    <property type="project" value="RGD"/>
</dbReference>
<dbReference type="GO" id="GO:0030027">
    <property type="term" value="C:lamellipodium"/>
    <property type="evidence" value="ECO:0000266"/>
    <property type="project" value="RGD"/>
</dbReference>
<dbReference type="GO" id="GO:0016020">
    <property type="term" value="C:membrane"/>
    <property type="evidence" value="ECO:0000318"/>
    <property type="project" value="GO_Central"/>
</dbReference>
<dbReference type="GO" id="GO:0045121">
    <property type="term" value="C:membrane raft"/>
    <property type="evidence" value="ECO:0000314"/>
    <property type="project" value="CAFA"/>
</dbReference>
<dbReference type="GO" id="GO:0035267">
    <property type="term" value="C:NuA4 histone acetyltransferase complex"/>
    <property type="evidence" value="ECO:0000266"/>
    <property type="project" value="RGD"/>
</dbReference>
<dbReference type="GO" id="GO:0000786">
    <property type="term" value="C:nucleosome"/>
    <property type="evidence" value="ECO:0000266"/>
    <property type="project" value="RGD"/>
</dbReference>
<dbReference type="GO" id="GO:0005634">
    <property type="term" value="C:nucleus"/>
    <property type="evidence" value="ECO:0000250"/>
    <property type="project" value="UniProtKB"/>
</dbReference>
<dbReference type="GO" id="GO:0005886">
    <property type="term" value="C:plasma membrane"/>
    <property type="evidence" value="ECO:0000250"/>
    <property type="project" value="AgBase"/>
</dbReference>
<dbReference type="GO" id="GO:0002102">
    <property type="term" value="C:podosome"/>
    <property type="evidence" value="ECO:0000314"/>
    <property type="project" value="RGD"/>
</dbReference>
<dbReference type="GO" id="GO:0098871">
    <property type="term" value="C:postsynaptic actin cytoskeleton"/>
    <property type="evidence" value="ECO:0000266"/>
    <property type="project" value="RGD"/>
</dbReference>
<dbReference type="GO" id="GO:0032991">
    <property type="term" value="C:protein-containing complex"/>
    <property type="evidence" value="ECO:0000314"/>
    <property type="project" value="RGD"/>
</dbReference>
<dbReference type="GO" id="GO:1990904">
    <property type="term" value="C:ribonucleoprotein complex"/>
    <property type="evidence" value="ECO:0000266"/>
    <property type="project" value="RGD"/>
</dbReference>
<dbReference type="GO" id="GO:0098685">
    <property type="term" value="C:Schaffer collateral - CA1 synapse"/>
    <property type="evidence" value="ECO:0000266"/>
    <property type="project" value="RGD"/>
</dbReference>
<dbReference type="GO" id="GO:0001725">
    <property type="term" value="C:stress fiber"/>
    <property type="evidence" value="ECO:0000314"/>
    <property type="project" value="RGD"/>
</dbReference>
<dbReference type="GO" id="GO:0045202">
    <property type="term" value="C:synapse"/>
    <property type="evidence" value="ECO:0000318"/>
    <property type="project" value="GO_Central"/>
</dbReference>
<dbReference type="GO" id="GO:0070160">
    <property type="term" value="C:tight junction"/>
    <property type="evidence" value="ECO:0000266"/>
    <property type="project" value="RGD"/>
</dbReference>
<dbReference type="GO" id="GO:0005524">
    <property type="term" value="F:ATP binding"/>
    <property type="evidence" value="ECO:0007669"/>
    <property type="project" value="UniProtKB-KW"/>
</dbReference>
<dbReference type="GO" id="GO:0016887">
    <property type="term" value="F:ATP hydrolysis activity"/>
    <property type="evidence" value="ECO:0000266"/>
    <property type="project" value="RGD"/>
</dbReference>
<dbReference type="GO" id="GO:0042802">
    <property type="term" value="F:identical protein binding"/>
    <property type="evidence" value="ECO:0000266"/>
    <property type="project" value="RGD"/>
</dbReference>
<dbReference type="GO" id="GO:0019894">
    <property type="term" value="F:kinesin binding"/>
    <property type="evidence" value="ECO:0000266"/>
    <property type="project" value="RGD"/>
</dbReference>
<dbReference type="GO" id="GO:0050998">
    <property type="term" value="F:nitric-oxide synthase binding"/>
    <property type="evidence" value="ECO:0000266"/>
    <property type="project" value="RGD"/>
</dbReference>
<dbReference type="GO" id="GO:0019901">
    <property type="term" value="F:protein kinase binding"/>
    <property type="evidence" value="ECO:0000353"/>
    <property type="project" value="RGD"/>
</dbReference>
<dbReference type="GO" id="GO:0098973">
    <property type="term" value="F:structural constituent of postsynaptic actin cytoskeleton"/>
    <property type="evidence" value="ECO:0000266"/>
    <property type="project" value="RGD"/>
</dbReference>
<dbReference type="GO" id="GO:0030957">
    <property type="term" value="F:Tat protein binding"/>
    <property type="evidence" value="ECO:0000266"/>
    <property type="project" value="RGD"/>
</dbReference>
<dbReference type="GO" id="GO:0141108">
    <property type="term" value="F:transporter regulator activity"/>
    <property type="evidence" value="ECO:0000250"/>
    <property type="project" value="ARUK-UCL"/>
</dbReference>
<dbReference type="GO" id="GO:0034333">
    <property type="term" value="P:adherens junction assembly"/>
    <property type="evidence" value="ECO:0000266"/>
    <property type="project" value="RGD"/>
</dbReference>
<dbReference type="GO" id="GO:0045176">
    <property type="term" value="P:apical protein localization"/>
    <property type="evidence" value="ECO:0000266"/>
    <property type="project" value="RGD"/>
</dbReference>
<dbReference type="GO" id="GO:0007409">
    <property type="term" value="P:axonogenesis"/>
    <property type="evidence" value="ECO:0000314"/>
    <property type="project" value="RGD"/>
</dbReference>
<dbReference type="GO" id="GO:0048870">
    <property type="term" value="P:cell motility"/>
    <property type="evidence" value="ECO:0000266"/>
    <property type="project" value="RGD"/>
</dbReference>
<dbReference type="GO" id="GO:0072749">
    <property type="term" value="P:cellular response to cytochalasin B"/>
    <property type="evidence" value="ECO:0000266"/>
    <property type="project" value="RGD"/>
</dbReference>
<dbReference type="GO" id="GO:0071257">
    <property type="term" value="P:cellular response to electrical stimulus"/>
    <property type="evidence" value="ECO:0000314"/>
    <property type="project" value="RGD"/>
</dbReference>
<dbReference type="GO" id="GO:0007623">
    <property type="term" value="P:circadian rhythm"/>
    <property type="evidence" value="ECO:0000270"/>
    <property type="project" value="RGD"/>
</dbReference>
<dbReference type="GO" id="GO:0007010">
    <property type="term" value="P:cytoskeleton organization"/>
    <property type="evidence" value="ECO:0000315"/>
    <property type="project" value="ARUK-UCL"/>
</dbReference>
<dbReference type="GO" id="GO:0007163">
    <property type="term" value="P:establishment or maintenance of cell polarity"/>
    <property type="evidence" value="ECO:0000266"/>
    <property type="project" value="RGD"/>
</dbReference>
<dbReference type="GO" id="GO:0001738">
    <property type="term" value="P:morphogenesis of a polarized epithelium"/>
    <property type="evidence" value="ECO:0000266"/>
    <property type="project" value="RGD"/>
</dbReference>
<dbReference type="GO" id="GO:1905168">
    <property type="term" value="P:positive regulation of double-strand break repair via homologous recombination"/>
    <property type="evidence" value="ECO:0000266"/>
    <property type="project" value="RGD"/>
</dbReference>
<dbReference type="GO" id="GO:0071896">
    <property type="term" value="P:protein localization to adherens junction"/>
    <property type="evidence" value="ECO:0000266"/>
    <property type="project" value="RGD"/>
</dbReference>
<dbReference type="GO" id="GO:0051726">
    <property type="term" value="P:regulation of cell cycle"/>
    <property type="evidence" value="ECO:0000266"/>
    <property type="project" value="RGD"/>
</dbReference>
<dbReference type="GO" id="GO:0051621">
    <property type="term" value="P:regulation of norepinephrine uptake"/>
    <property type="evidence" value="ECO:0000315"/>
    <property type="project" value="ARUK-UCL"/>
</dbReference>
<dbReference type="GO" id="GO:1903076">
    <property type="term" value="P:regulation of protein localization to plasma membrane"/>
    <property type="evidence" value="ECO:0000266"/>
    <property type="project" value="RGD"/>
</dbReference>
<dbReference type="GO" id="GO:1900242">
    <property type="term" value="P:regulation of synaptic vesicle endocytosis"/>
    <property type="evidence" value="ECO:0000266"/>
    <property type="project" value="RGD"/>
</dbReference>
<dbReference type="GO" id="GO:0150111">
    <property type="term" value="P:regulation of transepithelial transport"/>
    <property type="evidence" value="ECO:0000266"/>
    <property type="project" value="RGD"/>
</dbReference>
<dbReference type="GO" id="GO:0035902">
    <property type="term" value="P:response to immobilization stress"/>
    <property type="evidence" value="ECO:0000270"/>
    <property type="project" value="RGD"/>
</dbReference>
<dbReference type="GO" id="GO:0009612">
    <property type="term" value="P:response to mechanical stimulus"/>
    <property type="evidence" value="ECO:0000270"/>
    <property type="project" value="RGD"/>
</dbReference>
<dbReference type="GO" id="GO:0060041">
    <property type="term" value="P:retina development in camera-type eye"/>
    <property type="evidence" value="ECO:0000270"/>
    <property type="project" value="RGD"/>
</dbReference>
<dbReference type="CDD" id="cd10224">
    <property type="entry name" value="ASKHA_NBD_actin"/>
    <property type="match status" value="1"/>
</dbReference>
<dbReference type="FunFam" id="3.30.420.40:FF:000131">
    <property type="entry name" value="Actin, alpha skeletal muscle"/>
    <property type="match status" value="1"/>
</dbReference>
<dbReference type="FunFam" id="3.30.420.40:FF:000291">
    <property type="entry name" value="Actin, alpha skeletal muscle"/>
    <property type="match status" value="1"/>
</dbReference>
<dbReference type="FunFam" id="3.90.640.10:FF:000047">
    <property type="entry name" value="Actin, alpha skeletal muscle"/>
    <property type="match status" value="1"/>
</dbReference>
<dbReference type="FunFam" id="3.30.420.40:FF:000058">
    <property type="entry name" value="Putative actin-related protein 5"/>
    <property type="match status" value="1"/>
</dbReference>
<dbReference type="Gene3D" id="3.30.420.40">
    <property type="match status" value="2"/>
</dbReference>
<dbReference type="Gene3D" id="3.90.640.10">
    <property type="entry name" value="Actin, Chain A, domain 4"/>
    <property type="match status" value="1"/>
</dbReference>
<dbReference type="InterPro" id="IPR004000">
    <property type="entry name" value="Actin"/>
</dbReference>
<dbReference type="InterPro" id="IPR020902">
    <property type="entry name" value="Actin/actin-like_CS"/>
</dbReference>
<dbReference type="InterPro" id="IPR004001">
    <property type="entry name" value="Actin_CS"/>
</dbReference>
<dbReference type="InterPro" id="IPR043129">
    <property type="entry name" value="ATPase_NBD"/>
</dbReference>
<dbReference type="PANTHER" id="PTHR11937">
    <property type="entry name" value="ACTIN"/>
    <property type="match status" value="1"/>
</dbReference>
<dbReference type="Pfam" id="PF00022">
    <property type="entry name" value="Actin"/>
    <property type="match status" value="1"/>
</dbReference>
<dbReference type="PRINTS" id="PR00190">
    <property type="entry name" value="ACTIN"/>
</dbReference>
<dbReference type="SMART" id="SM00268">
    <property type="entry name" value="ACTIN"/>
    <property type="match status" value="1"/>
</dbReference>
<dbReference type="SUPFAM" id="SSF53067">
    <property type="entry name" value="Actin-like ATPase domain"/>
    <property type="match status" value="2"/>
</dbReference>
<dbReference type="PROSITE" id="PS00406">
    <property type="entry name" value="ACTINS_1"/>
    <property type="match status" value="1"/>
</dbReference>
<dbReference type="PROSITE" id="PS00432">
    <property type="entry name" value="ACTINS_2"/>
    <property type="match status" value="1"/>
</dbReference>
<dbReference type="PROSITE" id="PS01132">
    <property type="entry name" value="ACTINS_ACT_LIKE"/>
    <property type="match status" value="1"/>
</dbReference>
<reference key="1">
    <citation type="journal article" date="1983" name="Nucleic Acids Res.">
        <title>The nucleotide sequence of the rat cytoplasmic beta-actin gene.</title>
        <authorList>
            <person name="Nudel U."/>
            <person name="Zakut R."/>
            <person name="Shani M."/>
            <person name="Neuman S."/>
            <person name="Levy Z."/>
            <person name="Yaffe D."/>
        </authorList>
    </citation>
    <scope>NUCLEOTIDE SEQUENCE</scope>
</reference>
<reference key="2">
    <citation type="journal article" date="2004" name="Genome Res.">
        <title>The status, quality, and expansion of the NIH full-length cDNA project: the Mammalian Gene Collection (MGC).</title>
        <authorList>
            <consortium name="The MGC Project Team"/>
        </authorList>
    </citation>
    <scope>NUCLEOTIDE SEQUENCE [LARGE SCALE MRNA]</scope>
    <source>
        <tissue>Pituitary</tissue>
    </source>
</reference>
<reference key="3">
    <citation type="submission" date="2007-07" db="UniProtKB">
        <authorList>
            <person name="Lubec G."/>
            <person name="Afjehi-Sadat L."/>
            <person name="Chen W.-Q."/>
            <person name="Kang S.U."/>
        </authorList>
    </citation>
    <scope>PROTEIN SEQUENCE OF 19-39; 51-62; 85-113; 184-191; 197-206; 239-254; 292-312; 316-326; 329-335 AND 360-372</scope>
    <scope>IDENTIFICATION BY MASS SPECTROMETRY</scope>
    <source>
        <strain>Sprague-Dawley</strain>
        <tissue>Brain</tissue>
        <tissue>Hippocampus</tissue>
        <tissue>Spinal cord</tissue>
    </source>
</reference>
<reference key="4">
    <citation type="journal article" date="2018" name="Elife">
        <title>SETD3 protein is the actin-specific histidine N-methyltransferase.</title>
        <authorList>
            <person name="Kwiatkowski S."/>
            <person name="Seliga A.K."/>
            <person name="Vertommen D."/>
            <person name="Terreri M."/>
            <person name="Ishikawa T."/>
            <person name="Grabowska I."/>
            <person name="Tiebe M."/>
            <person name="Teleman A.A."/>
            <person name="Jagielski A.K."/>
            <person name="Veiga-da-Cunha M."/>
            <person name="Drozak J."/>
        </authorList>
    </citation>
    <scope>METHYLATION AT HIS-73</scope>
</reference>
<reference key="5">
    <citation type="journal article" date="2019" name="J. Mol. Histol.">
        <title>Mapping the sites of localization of epithelial sodium channel (ENaC) and CFTR in segments of the mammalian epididymis.</title>
        <authorList>
            <person name="Sharma S."/>
            <person name="Hanukoglu I."/>
        </authorList>
    </citation>
    <scope>TISSUE SPECIFICITY</scope>
</reference>
<comment type="function">
    <text evidence="2 5">Actin is a highly conserved protein that polymerizes to produce filaments that form cross-linked networks in the cytoplasm of cells (By similarity). Actin exists in both monomeric (G-actin) and polymeric (F-actin) forms, both forms playing key functions, such as cell motility and contraction (By similarity). In addition to their role in the cytoplasmic cytoskeleton, G- and F-actin also localize in the nucleus, and regulate gene transcription and motility and repair of damaged DNA (By similarity). Plays a role in the assembly of the gamma-tubulin ring complex (gTuRC), which regulates the minus-end nucleation of alpha-beta tubulin heterodimers that grow into microtubule protafilaments (By similarity). Part of the ACTR1A/ACTB filament around which the dynactin complex is built (By similarity). The dynactin multiprotein complex activates the molecular motor dynein for ultra-processive transport along microtubules (By similarity).</text>
</comment>
<comment type="catalytic activity">
    <reaction evidence="4">
        <text>ATP + H2O = ADP + phosphate + H(+)</text>
        <dbReference type="Rhea" id="RHEA:13065"/>
        <dbReference type="ChEBI" id="CHEBI:15377"/>
        <dbReference type="ChEBI" id="CHEBI:15378"/>
        <dbReference type="ChEBI" id="CHEBI:30616"/>
        <dbReference type="ChEBI" id="CHEBI:43474"/>
        <dbReference type="ChEBI" id="CHEBI:456216"/>
    </reaction>
</comment>
<comment type="subunit">
    <text evidence="1 2 3 5">Polymerization of globular actin (G-actin) leads to a structural filament (F-actin) in the form of a two-stranded helix (By similarity). Each actin can bind to 4 others (By similarity). Identified in a IGF2BP1-dependent mRNP granule complex containing untranslated mRNAs (By similarity). Component of the BAF complex, which includes at least actin (ACTB), ARID1A, ARID1B/BAF250, SMARCA2, SMARCA4/BRG1, ACTL6A/BAF53, ACTL6B/BAF53B, SMARCE1/BAF57 SMARCC1/BAF155, SMARCC2/BAF170, SMARCB1/SNF5/INI1, and one or more of SMARCD1/BAF60A, SMARCD2/BAF60B, or SMARCD3/BAF60C (By similarity). In muscle cells, the BAF complex also contains DPF3 (By similarity). Found in a complex with XPO6, Ran, ACTB and PFN1 (By similarity). Interacts with PFN1 (By similarity). Interacts with XPO6 and EMD (By similarity). Interacts with ERBB2 (By similarity). Interacts with GCSAM (By similarity). Interacts with TBC1D21 (By similarity). Interacts with CPNE1 (via VWFA domain) and CPNE4 (via VWFA domain) (By similarity). Interacts with DHX9 (via C-terminus); this interaction is direct and mediates the attachment to nuclear ribonucleoprotein complexes (By similarity). Interacts with FAM107A (By similarity). Associates with the gamma-tubulin ring complex (gTuRC) consisting of TUBGCP2, TUBGCP3, TUBGCP4, TUBGCP5 and TUBGCP6 and gamma-tubulin TUBG1 or TUBG2; within the complex, interacts with TUBGCP3 and TUBGCP6 to form a luminal bridge with MZT1 that stabilizes the initial structure during complex assembly (By similarity). Part of the ACTR1A/ACTB filament around which the dynactin complex is built (By similarity). The filament contains 8 copies of ACTR1A and 1 ACTB (By similarity). Interacts with TPRN which forms ring-like structures in the stereocilium taper region; the interaction may stabilize stereocilia in inner ear hair cells (By similarity). Interacts with AMOTL2 (via N-terminus), the interaction facilitates binding of cell junction complexes to actin fibers in endothelial cells (By similarity).</text>
</comment>
<comment type="interaction">
    <interactant intactId="EBI-349272">
        <id>P60711</id>
    </interactant>
    <interactant intactId="EBI-7269229">
        <id>Q5BJU7</id>
        <label>Wasf1</label>
    </interactant>
    <organismsDiffer>false</organismsDiffer>
    <experiments>2</experiments>
</comment>
<comment type="subcellular location">
    <subcellularLocation>
        <location evidence="2">Cytoplasm</location>
        <location evidence="2">Cytoskeleton</location>
    </subcellularLocation>
    <subcellularLocation>
        <location evidence="2">Nucleus</location>
    </subcellularLocation>
    <text evidence="2">Localized in cytoplasmic mRNP granules containing untranslated mRNAs.</text>
</comment>
<comment type="tissue specificity">
    <text evidence="7">Expressed in the epididymis (at protein level).</text>
</comment>
<comment type="PTM">
    <molecule>Actin, cytoplasmic 1</molecule>
    <text evidence="2">N-terminal cleavage of acetylated methionine of immature cytoplasmic actin by ACTMAP.</text>
</comment>
<comment type="PTM">
    <text evidence="2">ISGylated.</text>
</comment>
<comment type="PTM">
    <text evidence="3">Oxidation of Met-44 and Met-47 by MICALs (MICAL1, MICAL2 or MICAL3) to form methionine sulfoxide promotes actin filament depolymerization. MICAL1 and MICAL2 produce the (R)-S-oxide form. The (R)-S-oxide form is reverted by MSRB1 and MSRB2, which promote actin repolymerization.</text>
</comment>
<comment type="PTM">
    <text evidence="2">Monomethylation at Lys-84 (K84me1) regulates actin-myosin interaction and actomyosin-dependent processes. Demethylation by ALKBH4 is required for maintaining actomyosin dynamics supporting normal cleavage furrow ingression during cytokinesis and cell migration.</text>
</comment>
<comment type="PTM">
    <text evidence="3 6">Methylated at His-73 by SETD3 (PubMed:30526847). Methylation at His-73 is required for smooth muscle contraction of the laboring uterus during delivery (By similarity).</text>
</comment>
<comment type="PTM">
    <molecule>Actin, cytoplasmic 1, N-terminally processed</molecule>
    <text evidence="2">N-terminal acetylation by NAA80 affects actin filament depolymerization and elongation, including elongation driven by formins. In contrast, filament nucleation by the Arp2/3 complex is not affected.</text>
</comment>
<comment type="miscellaneous">
    <text evidence="2">In vertebrates 3 main groups of actin isoforms, alpha, beta and gamma have been identified. The alpha actins are found in muscle tissues and are a major constituent of the contractile apparatus. The beta and gamma actins coexist in most cell types as components of the cytoskeleton and as mediators of internal cell motility.</text>
</comment>
<comment type="similarity">
    <text evidence="8">Belongs to the actin family.</text>
</comment>
<protein>
    <recommendedName>
        <fullName>Actin, cytoplasmic 1</fullName>
        <ecNumber evidence="4">3.6.4.-</ecNumber>
    </recommendedName>
    <alternativeName>
        <fullName>Beta-actin</fullName>
    </alternativeName>
    <component>
        <recommendedName>
            <fullName>Actin, cytoplasmic 1, N-terminally processed</fullName>
        </recommendedName>
    </component>
</protein>
<accession>P60711</accession>
<accession>P02570</accession>
<accession>P70514</accession>
<accession>P99021</accession>
<accession>Q11211</accession>
<accession>Q64316</accession>
<sequence>MDDDIAALVVDNGSGMCKAGFAGDDAPRAVFPSIVGRPRHQGVMVGMGQKDSYVGDEAQSKRGILTLKYPIEHGIVTNWDDMEKIWHHTFYNELRVAPEEHPVLLTEAPLNPKANREKMTQIMFETFNTPAMYVAIQAVLSLYASGRTTGIVMDSGDGVTHTVPIYEGYALPHAILRLDLAGRDLTDYLMKILTERGYSFTTTAEREIVRDIKEKLCYVALDFEQEMATAASSSSLEKSYELPDGQVITIGNERFRCPEALFQPSFLGMESCGIHETTFNSIMKCDVDIRKDLYANTVLSGGTTMYPGIADRMQKEITALAPSTMKIKIIAPPERKYSVWIGGSILASLSTFQQMWISKQEYDESGPSIVHRKCF</sequence>
<keyword id="KW-0002">3D-structure</keyword>
<keyword id="KW-0007">Acetylation</keyword>
<keyword id="KW-0067">ATP-binding</keyword>
<keyword id="KW-0963">Cytoplasm</keyword>
<keyword id="KW-0206">Cytoskeleton</keyword>
<keyword id="KW-0903">Direct protein sequencing</keyword>
<keyword id="KW-0378">Hydrolase</keyword>
<keyword id="KW-0488">Methylation</keyword>
<keyword id="KW-0547">Nucleotide-binding</keyword>
<keyword id="KW-0539">Nucleus</keyword>
<keyword id="KW-0558">Oxidation</keyword>
<keyword id="KW-1185">Reference proteome</keyword>
<keyword id="KW-0832">Ubl conjugation</keyword>